<comment type="function">
    <text evidence="1">One of two assembly initiator proteins, it binds directly to the 5'-end of the 23S rRNA, where it nucleates assembly of the 50S subunit.</text>
</comment>
<comment type="function">
    <text evidence="1">One of the proteins that surrounds the polypeptide exit tunnel on the outside of the subunit.</text>
</comment>
<comment type="subunit">
    <text evidence="1">Part of the 50S ribosomal subunit.</text>
</comment>
<comment type="similarity">
    <text evidence="1">Belongs to the universal ribosomal protein uL24 family.</text>
</comment>
<sequence>MSKIKKGDDVIVIAGKDKGKRGTVLRVMKPDLVVVEGVNRLKKHQRPNPNKGDTGGIVEMDSPIQVSNIAIYNPATRKADRIGFKTVEGKGKARCFRSNEELIDA</sequence>
<gene>
    <name evidence="1" type="primary">rplX</name>
    <name type="ordered locus">Nmul_A0778</name>
</gene>
<reference key="1">
    <citation type="submission" date="2005-08" db="EMBL/GenBank/DDBJ databases">
        <title>Complete sequence of chromosome 1 of Nitrosospira multiformis ATCC 25196.</title>
        <authorList>
            <person name="Copeland A."/>
            <person name="Lucas S."/>
            <person name="Lapidus A."/>
            <person name="Barry K."/>
            <person name="Detter J.C."/>
            <person name="Glavina T."/>
            <person name="Hammon N."/>
            <person name="Israni S."/>
            <person name="Pitluck S."/>
            <person name="Chain P."/>
            <person name="Malfatti S."/>
            <person name="Shin M."/>
            <person name="Vergez L."/>
            <person name="Schmutz J."/>
            <person name="Larimer F."/>
            <person name="Land M."/>
            <person name="Hauser L."/>
            <person name="Kyrpides N."/>
            <person name="Lykidis A."/>
            <person name="Richardson P."/>
        </authorList>
    </citation>
    <scope>NUCLEOTIDE SEQUENCE [LARGE SCALE GENOMIC DNA]</scope>
    <source>
        <strain>ATCC 25196 / NCIMB 11849 / C 71</strain>
    </source>
</reference>
<feature type="chain" id="PRO_0000241629" description="Large ribosomal subunit protein uL24">
    <location>
        <begin position="1"/>
        <end position="105"/>
    </location>
</feature>
<name>RL24_NITMU</name>
<proteinExistence type="inferred from homology"/>
<organism>
    <name type="scientific">Nitrosospira multiformis (strain ATCC 25196 / NCIMB 11849 / C 71)</name>
    <dbReference type="NCBI Taxonomy" id="323848"/>
    <lineage>
        <taxon>Bacteria</taxon>
        <taxon>Pseudomonadati</taxon>
        <taxon>Pseudomonadota</taxon>
        <taxon>Betaproteobacteria</taxon>
        <taxon>Nitrosomonadales</taxon>
        <taxon>Nitrosomonadaceae</taxon>
        <taxon>Nitrosospira</taxon>
    </lineage>
</organism>
<accession>Q2YAY6</accession>
<protein>
    <recommendedName>
        <fullName evidence="1">Large ribosomal subunit protein uL24</fullName>
    </recommendedName>
    <alternativeName>
        <fullName evidence="2">50S ribosomal protein L24</fullName>
    </alternativeName>
</protein>
<evidence type="ECO:0000255" key="1">
    <source>
        <dbReference type="HAMAP-Rule" id="MF_01326"/>
    </source>
</evidence>
<evidence type="ECO:0000305" key="2"/>
<keyword id="KW-1185">Reference proteome</keyword>
<keyword id="KW-0687">Ribonucleoprotein</keyword>
<keyword id="KW-0689">Ribosomal protein</keyword>
<keyword id="KW-0694">RNA-binding</keyword>
<keyword id="KW-0699">rRNA-binding</keyword>
<dbReference type="EMBL" id="CP000103">
    <property type="protein sequence ID" value="ABB74085.1"/>
    <property type="molecule type" value="Genomic_DNA"/>
</dbReference>
<dbReference type="RefSeq" id="WP_011380134.1">
    <property type="nucleotide sequence ID" value="NC_007614.1"/>
</dbReference>
<dbReference type="SMR" id="Q2YAY6"/>
<dbReference type="STRING" id="323848.Nmul_A0778"/>
<dbReference type="KEGG" id="nmu:Nmul_A0778"/>
<dbReference type="eggNOG" id="COG0198">
    <property type="taxonomic scope" value="Bacteria"/>
</dbReference>
<dbReference type="HOGENOM" id="CLU_093315_2_2_4"/>
<dbReference type="OrthoDB" id="9807419at2"/>
<dbReference type="Proteomes" id="UP000002718">
    <property type="component" value="Chromosome"/>
</dbReference>
<dbReference type="GO" id="GO:1990904">
    <property type="term" value="C:ribonucleoprotein complex"/>
    <property type="evidence" value="ECO:0007669"/>
    <property type="project" value="UniProtKB-KW"/>
</dbReference>
<dbReference type="GO" id="GO:0005840">
    <property type="term" value="C:ribosome"/>
    <property type="evidence" value="ECO:0007669"/>
    <property type="project" value="UniProtKB-KW"/>
</dbReference>
<dbReference type="GO" id="GO:0019843">
    <property type="term" value="F:rRNA binding"/>
    <property type="evidence" value="ECO:0007669"/>
    <property type="project" value="UniProtKB-UniRule"/>
</dbReference>
<dbReference type="GO" id="GO:0003735">
    <property type="term" value="F:structural constituent of ribosome"/>
    <property type="evidence" value="ECO:0007669"/>
    <property type="project" value="InterPro"/>
</dbReference>
<dbReference type="GO" id="GO:0006412">
    <property type="term" value="P:translation"/>
    <property type="evidence" value="ECO:0007669"/>
    <property type="project" value="UniProtKB-UniRule"/>
</dbReference>
<dbReference type="CDD" id="cd06089">
    <property type="entry name" value="KOW_RPL26"/>
    <property type="match status" value="1"/>
</dbReference>
<dbReference type="FunFam" id="2.30.30.30:FF:000004">
    <property type="entry name" value="50S ribosomal protein L24"/>
    <property type="match status" value="1"/>
</dbReference>
<dbReference type="Gene3D" id="2.30.30.30">
    <property type="match status" value="1"/>
</dbReference>
<dbReference type="HAMAP" id="MF_01326_B">
    <property type="entry name" value="Ribosomal_uL24_B"/>
    <property type="match status" value="1"/>
</dbReference>
<dbReference type="InterPro" id="IPR005824">
    <property type="entry name" value="KOW"/>
</dbReference>
<dbReference type="InterPro" id="IPR014722">
    <property type="entry name" value="Rib_uL2_dom2"/>
</dbReference>
<dbReference type="InterPro" id="IPR003256">
    <property type="entry name" value="Ribosomal_uL24"/>
</dbReference>
<dbReference type="InterPro" id="IPR005825">
    <property type="entry name" value="Ribosomal_uL24_CS"/>
</dbReference>
<dbReference type="InterPro" id="IPR041988">
    <property type="entry name" value="Ribosomal_uL24_KOW"/>
</dbReference>
<dbReference type="InterPro" id="IPR008991">
    <property type="entry name" value="Translation_prot_SH3-like_sf"/>
</dbReference>
<dbReference type="NCBIfam" id="TIGR01079">
    <property type="entry name" value="rplX_bact"/>
    <property type="match status" value="1"/>
</dbReference>
<dbReference type="PANTHER" id="PTHR12903">
    <property type="entry name" value="MITOCHONDRIAL RIBOSOMAL PROTEIN L24"/>
    <property type="match status" value="1"/>
</dbReference>
<dbReference type="Pfam" id="PF00467">
    <property type="entry name" value="KOW"/>
    <property type="match status" value="1"/>
</dbReference>
<dbReference type="Pfam" id="PF17136">
    <property type="entry name" value="ribosomal_L24"/>
    <property type="match status" value="1"/>
</dbReference>
<dbReference type="SMART" id="SM00739">
    <property type="entry name" value="KOW"/>
    <property type="match status" value="1"/>
</dbReference>
<dbReference type="SUPFAM" id="SSF50104">
    <property type="entry name" value="Translation proteins SH3-like domain"/>
    <property type="match status" value="1"/>
</dbReference>
<dbReference type="PROSITE" id="PS01108">
    <property type="entry name" value="RIBOSOMAL_L24"/>
    <property type="match status" value="1"/>
</dbReference>